<reference key="1">
    <citation type="submission" date="2005-06" db="EMBL/GenBank/DDBJ databases">
        <authorList>
            <consortium name="NIH - Xenopus Gene Collection (XGC) project"/>
        </authorList>
    </citation>
    <scope>NUCLEOTIDE SEQUENCE [LARGE SCALE MRNA]</scope>
    <source>
        <tissue>Egg</tissue>
    </source>
</reference>
<comment type="function">
    <text evidence="1">Component of the Mediator complex, a coactivator involved in the regulated transcription of nearly all RNA polymerase II-dependent genes. Mediator functions as a bridge to convey information from gene-specific regulatory proteins to the basal RNA polymerase II transcription machinery. Mediator is recruited to promoters by direct interactions with regulatory proteins and serves as a scaffold for the assembly of a functional preinitiation complex with RNA polymerase II and the general transcription factors (By similarity).</text>
</comment>
<comment type="subunit">
    <text evidence="1">Component of the Mediator complex.</text>
</comment>
<comment type="subcellular location">
    <subcellularLocation>
        <location evidence="2">Nucleus</location>
    </subcellularLocation>
</comment>
<comment type="similarity">
    <text evidence="2">Belongs to the Mediator complex subunit 31 family.</text>
</comment>
<comment type="sequence caution" evidence="2">
    <conflict type="erroneous initiation">
        <sequence resource="EMBL-CDS" id="AAH97742"/>
    </conflict>
</comment>
<proteinExistence type="evidence at transcript level"/>
<gene>
    <name type="primary">med31-a</name>
    <name type="synonym">soh1-a</name>
</gene>
<name>MD31A_XENLA</name>
<feature type="chain" id="PRO_0000305709" description="Mediator of RNA polymerase II transcription subunit 31-A">
    <location>
        <begin position="1"/>
        <end position="128"/>
    </location>
</feature>
<protein>
    <recommendedName>
        <fullName>Mediator of RNA polymerase II transcription subunit 31-A</fullName>
    </recommendedName>
    <alternativeName>
        <fullName>Mediator complex subunit 31-A</fullName>
    </alternativeName>
    <alternativeName>
        <fullName>Mediator complex subunit soh1-A</fullName>
    </alternativeName>
</protein>
<accession>Q4QR03</accession>
<keyword id="KW-0010">Activator</keyword>
<keyword id="KW-0539">Nucleus</keyword>
<keyword id="KW-1185">Reference proteome</keyword>
<keyword id="KW-0804">Transcription</keyword>
<keyword id="KW-0805">Transcription regulation</keyword>
<organism>
    <name type="scientific">Xenopus laevis</name>
    <name type="common">African clawed frog</name>
    <dbReference type="NCBI Taxonomy" id="8355"/>
    <lineage>
        <taxon>Eukaryota</taxon>
        <taxon>Metazoa</taxon>
        <taxon>Chordata</taxon>
        <taxon>Craniata</taxon>
        <taxon>Vertebrata</taxon>
        <taxon>Euteleostomi</taxon>
        <taxon>Amphibia</taxon>
        <taxon>Batrachia</taxon>
        <taxon>Anura</taxon>
        <taxon>Pipoidea</taxon>
        <taxon>Pipidae</taxon>
        <taxon>Xenopodinae</taxon>
        <taxon>Xenopus</taxon>
        <taxon>Xenopus</taxon>
    </lineage>
</organism>
<sequence length="128" mass="15719">MAATMETDEQQRIRFQLELEFVQCLANPNYLNFLAQRGYFKDKPFVNYMKYLLYWKEPEYAKYLKYPQCLHMLELLQYEHFRKELVNAQCAKFIDEQQILHWQHYSRKRVRLQQALAEQQQQNNTSGK</sequence>
<dbReference type="EMBL" id="BC097742">
    <property type="protein sequence ID" value="AAH97742.1"/>
    <property type="status" value="ALT_INIT"/>
    <property type="molecule type" value="mRNA"/>
</dbReference>
<dbReference type="RefSeq" id="NP_001089501.2">
    <property type="nucleotide sequence ID" value="NM_001096032.1"/>
</dbReference>
<dbReference type="SMR" id="Q4QR03"/>
<dbReference type="DNASU" id="734553"/>
<dbReference type="GeneID" id="734553"/>
<dbReference type="KEGG" id="xla:734553"/>
<dbReference type="AGR" id="Xenbase:XB-GENE-6255891"/>
<dbReference type="CTD" id="734553"/>
<dbReference type="Xenbase" id="XB-GENE-6255891">
    <property type="gene designation" value="med31.L"/>
</dbReference>
<dbReference type="OrthoDB" id="10257739at2759"/>
<dbReference type="Proteomes" id="UP000186698">
    <property type="component" value="Chromosome 2L"/>
</dbReference>
<dbReference type="Bgee" id="734553">
    <property type="expression patterns" value="Expressed in neurula embryo and 19 other cell types or tissues"/>
</dbReference>
<dbReference type="GO" id="GO:0070847">
    <property type="term" value="C:core mediator complex"/>
    <property type="evidence" value="ECO:0000318"/>
    <property type="project" value="GO_Central"/>
</dbReference>
<dbReference type="GO" id="GO:0016592">
    <property type="term" value="C:mediator complex"/>
    <property type="evidence" value="ECO:0000318"/>
    <property type="project" value="GO_Central"/>
</dbReference>
<dbReference type="GO" id="GO:0003712">
    <property type="term" value="F:transcription coregulator activity"/>
    <property type="evidence" value="ECO:0007669"/>
    <property type="project" value="InterPro"/>
</dbReference>
<dbReference type="GO" id="GO:0006357">
    <property type="term" value="P:regulation of transcription by RNA polymerase II"/>
    <property type="evidence" value="ECO:0000318"/>
    <property type="project" value="GO_Central"/>
</dbReference>
<dbReference type="FunFam" id="1.10.10.1340:FF:000001">
    <property type="entry name" value="Mediator of RNA polymerase II transcription subunit 31"/>
    <property type="match status" value="1"/>
</dbReference>
<dbReference type="Gene3D" id="1.10.10.1340">
    <property type="entry name" value="Mediator of RNA polymerase II, submodule Med31 (Soh1)"/>
    <property type="match status" value="1"/>
</dbReference>
<dbReference type="InterPro" id="IPR038089">
    <property type="entry name" value="Med31_sf"/>
</dbReference>
<dbReference type="InterPro" id="IPR008831">
    <property type="entry name" value="Mediator_Med31"/>
</dbReference>
<dbReference type="PANTHER" id="PTHR13186">
    <property type="entry name" value="MEDIATOR OF RNA POLYMERASE II TRANSCRIPTION SUBUNIT 31"/>
    <property type="match status" value="1"/>
</dbReference>
<dbReference type="Pfam" id="PF05669">
    <property type="entry name" value="Med31"/>
    <property type="match status" value="1"/>
</dbReference>
<evidence type="ECO:0000250" key="1"/>
<evidence type="ECO:0000305" key="2"/>